<protein>
    <recommendedName>
        <fullName>Capsid protein</fullName>
    </recommendedName>
    <alternativeName>
        <fullName>Coat protein</fullName>
    </alternativeName>
    <alternativeName>
        <fullName>p41</fullName>
    </alternativeName>
</protein>
<organism>
    <name type="scientific">Tomato bushy stunt virus (strain Cherry)</name>
    <name type="common">TBSV</name>
    <dbReference type="NCBI Taxonomy" id="12147"/>
    <lineage>
        <taxon>Viruses</taxon>
        <taxon>Riboviria</taxon>
        <taxon>Orthornavirae</taxon>
        <taxon>Kitrinoviricota</taxon>
        <taxon>Tolucaviricetes</taxon>
        <taxon>Tolivirales</taxon>
        <taxon>Tombusviridae</taxon>
        <taxon>Procedovirinae</taxon>
        <taxon>Tombusvirus</taxon>
        <taxon>Tombusvirus lycopersici</taxon>
    </lineage>
</organism>
<dbReference type="EMBL" id="M21958">
    <property type="protein sequence ID" value="AAB02536.1"/>
    <property type="molecule type" value="Genomic_RNA"/>
</dbReference>
<dbReference type="PIR" id="JA0114">
    <property type="entry name" value="VCVGTB"/>
</dbReference>
<dbReference type="RefSeq" id="NP_062899.1">
    <property type="nucleotide sequence ID" value="NC_001554.1"/>
</dbReference>
<dbReference type="SMR" id="P11689"/>
<dbReference type="KEGG" id="vg:1493953"/>
<dbReference type="Proteomes" id="UP000001666">
    <property type="component" value="Segment"/>
</dbReference>
<dbReference type="GO" id="GO:0039617">
    <property type="term" value="C:T=3 icosahedral viral capsid"/>
    <property type="evidence" value="ECO:0007669"/>
    <property type="project" value="UniProtKB-KW"/>
</dbReference>
<dbReference type="GO" id="GO:0003723">
    <property type="term" value="F:RNA binding"/>
    <property type="evidence" value="ECO:0007669"/>
    <property type="project" value="UniProtKB-KW"/>
</dbReference>
<dbReference type="GO" id="GO:0005198">
    <property type="term" value="F:structural molecule activity"/>
    <property type="evidence" value="ECO:0007669"/>
    <property type="project" value="InterPro"/>
</dbReference>
<dbReference type="Gene3D" id="2.60.120.20">
    <property type="match status" value="1"/>
</dbReference>
<dbReference type="InterPro" id="IPR000937">
    <property type="entry name" value="Capsid_prot_S-dom_vir"/>
</dbReference>
<dbReference type="InterPro" id="IPR055068">
    <property type="entry name" value="Coat_P"/>
</dbReference>
<dbReference type="InterPro" id="IPR029053">
    <property type="entry name" value="Viral_coat"/>
</dbReference>
<dbReference type="Pfam" id="PF22402">
    <property type="entry name" value="Coat_P"/>
    <property type="match status" value="1"/>
</dbReference>
<dbReference type="Pfam" id="PF00729">
    <property type="entry name" value="Viral_coat"/>
    <property type="match status" value="1"/>
</dbReference>
<dbReference type="PRINTS" id="PR00233">
    <property type="entry name" value="ICOSAHEDRAL"/>
</dbReference>
<dbReference type="SUPFAM" id="SSF88633">
    <property type="entry name" value="Positive stranded ssRNA viruses"/>
    <property type="match status" value="1"/>
</dbReference>
<dbReference type="PROSITE" id="PS00555">
    <property type="entry name" value="ICOSAH_VIR_COAT_S"/>
    <property type="match status" value="1"/>
</dbReference>
<comment type="function">
    <text>Capsid protein self-assembles to form an icosahedral capsid with a T=3 symmetry, about 32-35 nm in diameter, and consisting of 180 capsid proteins.</text>
</comment>
<comment type="subunit">
    <text evidence="2">Homomultimer.</text>
</comment>
<comment type="subcellular location">
    <subcellularLocation>
        <location evidence="2">Virion</location>
    </subcellularLocation>
</comment>
<comment type="similarity">
    <text evidence="2">Belongs to the icosahedral plant coat protein family.</text>
</comment>
<keyword id="KW-0167">Capsid protein</keyword>
<keyword id="KW-1185">Reference proteome</keyword>
<keyword id="KW-0694">RNA-binding</keyword>
<keyword id="KW-1142">T=3 icosahedral capsid protein</keyword>
<keyword id="KW-0946">Virion</keyword>
<feature type="chain" id="PRO_0000222867" description="Capsid protein">
    <location>
        <begin position="1"/>
        <end position="388"/>
    </location>
</feature>
<feature type="region of interest" description="R domain, interaction with RNA">
    <location>
        <begin position="1"/>
        <end position="102"/>
    </location>
</feature>
<feature type="region of interest" description="Involved in encapsidation" evidence="1">
    <location>
        <begin position="56"/>
        <end position="61"/>
    </location>
</feature>
<feature type="region of interest" description="S domain, virion shell">
    <location>
        <begin position="103"/>
        <end position="264"/>
    </location>
</feature>
<feature type="region of interest" description="P domain, projecting">
    <location>
        <begin position="265"/>
        <end position="388"/>
    </location>
</feature>
<sequence length="388" mass="41151">MAMVKRNNNTGMIPVSTKQLLALGAAAGATALQGFVKNNGMAIVEGAVDLTKRAYKAVRRRGGKKQQMINHVGGTGGAIMAPVAVTRQLVGSKPKFTGRTSGSVTVTHREYLSQVNNSTGFQVNGGIVGNLLQLNPLNGTLFSWLPAIASNFDQYTFNSVVLHYVPLCSTTEVGRVAIYFDKDSEDPEPADRVELANYSVLKETAPWAEAMLRVPTDKIKRFCDDSSTSDHKLIDLGQLGIATYGGAGTNAVGDIFISYSVTLYFPQPTNTLLSTRRLDLAGALVTASGPGYLLVSRTATVLTMTFRATGTFVISGTYRCLTATTLGLAGGVNVNSITVVDNIGTDSAFFINCTVSNLPSVVTFTSTGITSATVHCVRATRQNDVSLI</sequence>
<proteinExistence type="inferred from homology"/>
<accession>P11689</accession>
<gene>
    <name type="ORF">ORF2</name>
</gene>
<evidence type="ECO:0000250" key="1"/>
<evidence type="ECO:0000305" key="2"/>
<name>CAPSD_TBSVC</name>
<organismHost>
    <name type="scientific">Capsicum annuum</name>
    <name type="common">Capsicum pepper</name>
    <dbReference type="NCBI Taxonomy" id="4072"/>
</organismHost>
<organismHost>
    <name type="scientific">Malus</name>
    <dbReference type="NCBI Taxonomy" id="3749"/>
</organismHost>
<organismHost>
    <name type="scientific">Pyrus</name>
    <name type="common">pears</name>
    <dbReference type="NCBI Taxonomy" id="3766"/>
</organismHost>
<organismHost>
    <name type="scientific">Solanum lycopersicum</name>
    <name type="common">Tomato</name>
    <name type="synonym">Lycopersicon esculentum</name>
    <dbReference type="NCBI Taxonomy" id="4081"/>
</organismHost>
<organismHost>
    <name type="scientific">Solanum melongena</name>
    <name type="common">eggplant</name>
    <dbReference type="NCBI Taxonomy" id="4111"/>
</organismHost>
<organismHost>
    <name type="scientific">Tolmiea menziesii</name>
    <dbReference type="NCBI Taxonomy" id="29777"/>
</organismHost>
<organismHost>
    <name type="scientific">Tulipa</name>
    <dbReference type="NCBI Taxonomy" id="13305"/>
</organismHost>
<reference key="1">
    <citation type="journal article" date="1989" name="Virology">
        <title>Organization of tomato bushy stunt virus genome: characterization of the coat protein gene and the 3' terminus.</title>
        <authorList>
            <person name="Hillman B.I."/>
            <person name="Hearne P.Q."/>
            <person name="Rochon D."/>
            <person name="Morris T.J."/>
        </authorList>
    </citation>
    <scope>NUCLEOTIDE SEQUENCE [GENOMIC RNA]</scope>
</reference>
<reference key="2">
    <citation type="journal article" date="1990" name="Virology">
        <title>The complete genome structure and synthesis of infectious RNA from clones of tomato bushy stunt virus.</title>
        <authorList>
            <person name="Hearne P.Q."/>
            <person name="Knorr D.A."/>
            <person name="Hillman B.I."/>
            <person name="Morris T.J."/>
        </authorList>
    </citation>
    <scope>NUCLEOTIDE SEQUENCE [GENOMIC RNA]</scope>
</reference>